<accession>B2VDJ9</accession>
<reference key="1">
    <citation type="journal article" date="2008" name="Environ. Microbiol.">
        <title>The genome of Erwinia tasmaniensis strain Et1/99, a non-pathogenic bacterium in the genus Erwinia.</title>
        <authorList>
            <person name="Kube M."/>
            <person name="Migdoll A.M."/>
            <person name="Mueller I."/>
            <person name="Kuhl H."/>
            <person name="Beck A."/>
            <person name="Reinhardt R."/>
            <person name="Geider K."/>
        </authorList>
    </citation>
    <scope>NUCLEOTIDE SEQUENCE [LARGE SCALE GENOMIC DNA]</scope>
    <source>
        <strain>DSM 17950 / CFBP 7177 / CIP 109463 / NCPPB 4357 / Et1/99</strain>
    </source>
</reference>
<gene>
    <name evidence="1" type="primary">trhO</name>
    <name type="ordered locus">ETA_20590</name>
</gene>
<proteinExistence type="inferred from homology"/>
<comment type="function">
    <text evidence="1">Catalyzes oxygen-dependent 5-hydroxyuridine (ho5U) modification at position 34 in tRNAs.</text>
</comment>
<comment type="catalytic activity">
    <reaction evidence="1">
        <text>uridine(34) in tRNA + AH2 + O2 = 5-hydroxyuridine(34) in tRNA + A + H2O</text>
        <dbReference type="Rhea" id="RHEA:64224"/>
        <dbReference type="Rhea" id="RHEA-COMP:11727"/>
        <dbReference type="Rhea" id="RHEA-COMP:13381"/>
        <dbReference type="ChEBI" id="CHEBI:13193"/>
        <dbReference type="ChEBI" id="CHEBI:15377"/>
        <dbReference type="ChEBI" id="CHEBI:15379"/>
        <dbReference type="ChEBI" id="CHEBI:17499"/>
        <dbReference type="ChEBI" id="CHEBI:65315"/>
        <dbReference type="ChEBI" id="CHEBI:136877"/>
    </reaction>
</comment>
<comment type="similarity">
    <text evidence="1">Belongs to the TrhO family.</text>
</comment>
<feature type="chain" id="PRO_1000200352" description="tRNA uridine(34) hydroxylase">
    <location>
        <begin position="1"/>
        <end position="350"/>
    </location>
</feature>
<feature type="domain" description="Rhodanese" evidence="1">
    <location>
        <begin position="146"/>
        <end position="240"/>
    </location>
</feature>
<feature type="active site" description="Cysteine persulfide intermediate" evidence="1">
    <location>
        <position position="200"/>
    </location>
</feature>
<keyword id="KW-0560">Oxidoreductase</keyword>
<keyword id="KW-1185">Reference proteome</keyword>
<keyword id="KW-0819">tRNA processing</keyword>
<protein>
    <recommendedName>
        <fullName evidence="1">tRNA uridine(34) hydroxylase</fullName>
        <ecNumber evidence="1">1.14.-.-</ecNumber>
    </recommendedName>
    <alternativeName>
        <fullName evidence="1">tRNA hydroxylation protein O</fullName>
    </alternativeName>
</protein>
<dbReference type="EC" id="1.14.-.-" evidence="1"/>
<dbReference type="EMBL" id="CU468135">
    <property type="protein sequence ID" value="CAO97105.1"/>
    <property type="molecule type" value="Genomic_DNA"/>
</dbReference>
<dbReference type="RefSeq" id="WP_012441779.1">
    <property type="nucleotide sequence ID" value="NC_010694.1"/>
</dbReference>
<dbReference type="SMR" id="B2VDJ9"/>
<dbReference type="STRING" id="465817.ETA_20590"/>
<dbReference type="KEGG" id="eta:ETA_20590"/>
<dbReference type="eggNOG" id="COG1054">
    <property type="taxonomic scope" value="Bacteria"/>
</dbReference>
<dbReference type="HOGENOM" id="CLU_038878_1_1_6"/>
<dbReference type="OrthoDB" id="9778326at2"/>
<dbReference type="Proteomes" id="UP000001726">
    <property type="component" value="Chromosome"/>
</dbReference>
<dbReference type="GO" id="GO:0016705">
    <property type="term" value="F:oxidoreductase activity, acting on paired donors, with incorporation or reduction of molecular oxygen"/>
    <property type="evidence" value="ECO:0007669"/>
    <property type="project" value="UniProtKB-UniRule"/>
</dbReference>
<dbReference type="GO" id="GO:0006400">
    <property type="term" value="P:tRNA modification"/>
    <property type="evidence" value="ECO:0007669"/>
    <property type="project" value="UniProtKB-UniRule"/>
</dbReference>
<dbReference type="CDD" id="cd01518">
    <property type="entry name" value="RHOD_YceA"/>
    <property type="match status" value="1"/>
</dbReference>
<dbReference type="Gene3D" id="3.30.70.100">
    <property type="match status" value="1"/>
</dbReference>
<dbReference type="Gene3D" id="3.40.250.10">
    <property type="entry name" value="Rhodanese-like domain"/>
    <property type="match status" value="1"/>
</dbReference>
<dbReference type="HAMAP" id="MF_00469">
    <property type="entry name" value="TrhO"/>
    <property type="match status" value="1"/>
</dbReference>
<dbReference type="InterPro" id="IPR001763">
    <property type="entry name" value="Rhodanese-like_dom"/>
</dbReference>
<dbReference type="InterPro" id="IPR036873">
    <property type="entry name" value="Rhodanese-like_dom_sf"/>
</dbReference>
<dbReference type="InterPro" id="IPR022111">
    <property type="entry name" value="Rhodanese_C"/>
</dbReference>
<dbReference type="InterPro" id="IPR020936">
    <property type="entry name" value="TrhO"/>
</dbReference>
<dbReference type="InterPro" id="IPR040503">
    <property type="entry name" value="TRHO_N"/>
</dbReference>
<dbReference type="NCBIfam" id="NF001133">
    <property type="entry name" value="PRK00142.1-1"/>
    <property type="match status" value="1"/>
</dbReference>
<dbReference type="PANTHER" id="PTHR43846:SF1">
    <property type="entry name" value="TRNA URIDINE(34) HYDROXYLASE"/>
    <property type="match status" value="1"/>
</dbReference>
<dbReference type="PANTHER" id="PTHR43846">
    <property type="entry name" value="UPF0176 PROTEIN YCEA"/>
    <property type="match status" value="1"/>
</dbReference>
<dbReference type="Pfam" id="PF00581">
    <property type="entry name" value="Rhodanese"/>
    <property type="match status" value="1"/>
</dbReference>
<dbReference type="Pfam" id="PF12368">
    <property type="entry name" value="Rhodanese_C"/>
    <property type="match status" value="1"/>
</dbReference>
<dbReference type="Pfam" id="PF17773">
    <property type="entry name" value="UPF0176_N"/>
    <property type="match status" value="1"/>
</dbReference>
<dbReference type="SMART" id="SM00450">
    <property type="entry name" value="RHOD"/>
    <property type="match status" value="1"/>
</dbReference>
<dbReference type="SUPFAM" id="SSF52821">
    <property type="entry name" value="Rhodanese/Cell cycle control phosphatase"/>
    <property type="match status" value="1"/>
</dbReference>
<dbReference type="PROSITE" id="PS50206">
    <property type="entry name" value="RHODANESE_3"/>
    <property type="match status" value="1"/>
</dbReference>
<organism>
    <name type="scientific">Erwinia tasmaniensis (strain DSM 17950 / CFBP 7177 / CIP 109463 / NCPPB 4357 / Et1/99)</name>
    <dbReference type="NCBI Taxonomy" id="465817"/>
    <lineage>
        <taxon>Bacteria</taxon>
        <taxon>Pseudomonadati</taxon>
        <taxon>Pseudomonadota</taxon>
        <taxon>Gammaproteobacteria</taxon>
        <taxon>Enterobacterales</taxon>
        <taxon>Erwiniaceae</taxon>
        <taxon>Erwinia</taxon>
    </lineage>
</organism>
<sequence>MPVLHNLVSNEELKARMLAETEPRTTVSFYKYFTIEDPRAFRDALYVALTRLKVFGRVYVAAEGINAQVSVPASLYEEMKATLYGFHPALDKLRMNIALDDDGKSFWVLRLKVRERIVADGITDESFDASDVGAYLKAAEVNAMLDDPEAVFVDMRNHYEYEVGHFDNALEIPADTFRDQLPMAVDMLEQDKDKKIVMYCTGGIRCEKASAWMRHNGYENVYHIEGGIIEYARRAREQGLPVRFKGKNFVFDERMGERISDDVIAHCHQCGEPCDNHVNCLNDGCHLLFIQCPACAVKFNHCCSPLCMEELALTPEEQRARRAGRENGNKIFNKSRGLLSTTMHIPSPKE</sequence>
<evidence type="ECO:0000255" key="1">
    <source>
        <dbReference type="HAMAP-Rule" id="MF_00469"/>
    </source>
</evidence>
<name>TRHO_ERWT9</name>